<accession>A8AG60</accession>
<name>TRPA_CITK8</name>
<comment type="function">
    <text evidence="1">The alpha subunit is responsible for the aldol cleavage of indoleglycerol phosphate to indole and glyceraldehyde 3-phosphate.</text>
</comment>
<comment type="catalytic activity">
    <reaction evidence="1">
        <text>(1S,2R)-1-C-(indol-3-yl)glycerol 3-phosphate + L-serine = D-glyceraldehyde 3-phosphate + L-tryptophan + H2O</text>
        <dbReference type="Rhea" id="RHEA:10532"/>
        <dbReference type="ChEBI" id="CHEBI:15377"/>
        <dbReference type="ChEBI" id="CHEBI:33384"/>
        <dbReference type="ChEBI" id="CHEBI:57912"/>
        <dbReference type="ChEBI" id="CHEBI:58866"/>
        <dbReference type="ChEBI" id="CHEBI:59776"/>
        <dbReference type="EC" id="4.2.1.20"/>
    </reaction>
</comment>
<comment type="pathway">
    <text evidence="1">Amino-acid biosynthesis; L-tryptophan biosynthesis; L-tryptophan from chorismate: step 5/5.</text>
</comment>
<comment type="subunit">
    <text evidence="1">Tetramer of two alpha and two beta chains.</text>
</comment>
<comment type="similarity">
    <text evidence="1">Belongs to the TrpA family.</text>
</comment>
<gene>
    <name evidence="1" type="primary">trpA</name>
    <name type="ordered locus">CKO_01336</name>
</gene>
<keyword id="KW-0028">Amino-acid biosynthesis</keyword>
<keyword id="KW-0057">Aromatic amino acid biosynthesis</keyword>
<keyword id="KW-0456">Lyase</keyword>
<keyword id="KW-1185">Reference proteome</keyword>
<keyword id="KW-0822">Tryptophan biosynthesis</keyword>
<proteinExistence type="inferred from homology"/>
<sequence>MERYENLFAQLKDRKEGAFVPFVTLGDPSVEQSLNIIDTLIEAGADALELGIPFSDPLADGPTIQEATLRAFAAGVTPTQCFEMLALIRQKHPTIPIGLLMYANLVFSKGIDEFYAQCEKVGVDSVLVADVPVEESAPFRQAALRYNVAPIFICPPNADDDLLRQIASYGRGYTYLLSRAGVTGAENRAALPLHHLVEKLQEYNAAPPLQGFGISSPEQVTGAIEAGAAGAISGSAIVKLIEKNVANPGQMLTELKAFVTAMKAATRA</sequence>
<protein>
    <recommendedName>
        <fullName evidence="1">Tryptophan synthase alpha chain</fullName>
        <ecNumber evidence="1">4.2.1.20</ecNumber>
    </recommendedName>
</protein>
<feature type="chain" id="PRO_1000018190" description="Tryptophan synthase alpha chain">
    <location>
        <begin position="1"/>
        <end position="268"/>
    </location>
</feature>
<feature type="active site" description="Proton acceptor" evidence="1">
    <location>
        <position position="49"/>
    </location>
</feature>
<feature type="active site" description="Proton acceptor" evidence="1">
    <location>
        <position position="60"/>
    </location>
</feature>
<dbReference type="EC" id="4.2.1.20" evidence="1"/>
<dbReference type="EMBL" id="CP000822">
    <property type="protein sequence ID" value="ABV12473.1"/>
    <property type="molecule type" value="Genomic_DNA"/>
</dbReference>
<dbReference type="RefSeq" id="WP_012132216.1">
    <property type="nucleotide sequence ID" value="NC_009792.1"/>
</dbReference>
<dbReference type="SMR" id="A8AG60"/>
<dbReference type="STRING" id="290338.CKO_01336"/>
<dbReference type="GeneID" id="45135442"/>
<dbReference type="KEGG" id="cko:CKO_01336"/>
<dbReference type="HOGENOM" id="CLU_016734_0_4_6"/>
<dbReference type="OrthoDB" id="9804578at2"/>
<dbReference type="UniPathway" id="UPA00035">
    <property type="reaction ID" value="UER00044"/>
</dbReference>
<dbReference type="Proteomes" id="UP000008148">
    <property type="component" value="Chromosome"/>
</dbReference>
<dbReference type="GO" id="GO:0005829">
    <property type="term" value="C:cytosol"/>
    <property type="evidence" value="ECO:0007669"/>
    <property type="project" value="TreeGrafter"/>
</dbReference>
<dbReference type="GO" id="GO:0004834">
    <property type="term" value="F:tryptophan synthase activity"/>
    <property type="evidence" value="ECO:0007669"/>
    <property type="project" value="UniProtKB-UniRule"/>
</dbReference>
<dbReference type="CDD" id="cd04724">
    <property type="entry name" value="Tryptophan_synthase_alpha"/>
    <property type="match status" value="1"/>
</dbReference>
<dbReference type="FunFam" id="3.20.20.70:FF:000037">
    <property type="entry name" value="Tryptophan synthase alpha chain"/>
    <property type="match status" value="1"/>
</dbReference>
<dbReference type="Gene3D" id="3.20.20.70">
    <property type="entry name" value="Aldolase class I"/>
    <property type="match status" value="1"/>
</dbReference>
<dbReference type="HAMAP" id="MF_00131">
    <property type="entry name" value="Trp_synth_alpha"/>
    <property type="match status" value="1"/>
</dbReference>
<dbReference type="InterPro" id="IPR013785">
    <property type="entry name" value="Aldolase_TIM"/>
</dbReference>
<dbReference type="InterPro" id="IPR011060">
    <property type="entry name" value="RibuloseP-bd_barrel"/>
</dbReference>
<dbReference type="InterPro" id="IPR018204">
    <property type="entry name" value="Trp_synthase_alpha_AS"/>
</dbReference>
<dbReference type="InterPro" id="IPR002028">
    <property type="entry name" value="Trp_synthase_suA"/>
</dbReference>
<dbReference type="NCBIfam" id="TIGR00262">
    <property type="entry name" value="trpA"/>
    <property type="match status" value="1"/>
</dbReference>
<dbReference type="PANTHER" id="PTHR43406:SF1">
    <property type="entry name" value="TRYPTOPHAN SYNTHASE ALPHA CHAIN, CHLOROPLASTIC"/>
    <property type="match status" value="1"/>
</dbReference>
<dbReference type="PANTHER" id="PTHR43406">
    <property type="entry name" value="TRYPTOPHAN SYNTHASE, ALPHA CHAIN"/>
    <property type="match status" value="1"/>
</dbReference>
<dbReference type="Pfam" id="PF00290">
    <property type="entry name" value="Trp_syntA"/>
    <property type="match status" value="1"/>
</dbReference>
<dbReference type="SUPFAM" id="SSF51366">
    <property type="entry name" value="Ribulose-phoshate binding barrel"/>
    <property type="match status" value="1"/>
</dbReference>
<dbReference type="PROSITE" id="PS00167">
    <property type="entry name" value="TRP_SYNTHASE_ALPHA"/>
    <property type="match status" value="1"/>
</dbReference>
<reference key="1">
    <citation type="submission" date="2007-08" db="EMBL/GenBank/DDBJ databases">
        <authorList>
            <consortium name="The Citrobacter koseri Genome Sequencing Project"/>
            <person name="McClelland M."/>
            <person name="Sanderson E.K."/>
            <person name="Porwollik S."/>
            <person name="Spieth J."/>
            <person name="Clifton W.S."/>
            <person name="Latreille P."/>
            <person name="Courtney L."/>
            <person name="Wang C."/>
            <person name="Pepin K."/>
            <person name="Bhonagiri V."/>
            <person name="Nash W."/>
            <person name="Johnson M."/>
            <person name="Thiruvilangam P."/>
            <person name="Wilson R."/>
        </authorList>
    </citation>
    <scope>NUCLEOTIDE SEQUENCE [LARGE SCALE GENOMIC DNA]</scope>
    <source>
        <strain>ATCC BAA-895 / CDC 4225-83 / SGSC4696</strain>
    </source>
</reference>
<evidence type="ECO:0000255" key="1">
    <source>
        <dbReference type="HAMAP-Rule" id="MF_00131"/>
    </source>
</evidence>
<organism>
    <name type="scientific">Citrobacter koseri (strain ATCC BAA-895 / CDC 4225-83 / SGSC4696)</name>
    <dbReference type="NCBI Taxonomy" id="290338"/>
    <lineage>
        <taxon>Bacteria</taxon>
        <taxon>Pseudomonadati</taxon>
        <taxon>Pseudomonadota</taxon>
        <taxon>Gammaproteobacteria</taxon>
        <taxon>Enterobacterales</taxon>
        <taxon>Enterobacteriaceae</taxon>
        <taxon>Citrobacter</taxon>
    </lineage>
</organism>